<protein>
    <recommendedName>
        <fullName>Glutamine synthetase</fullName>
        <shortName>GS</shortName>
        <ecNumber>6.3.1.2</ecNumber>
    </recommendedName>
    <alternativeName>
        <fullName>Glutamate--ammonia ligase</fullName>
    </alternativeName>
</protein>
<keyword id="KW-0067">ATP-binding</keyword>
<keyword id="KW-0963">Cytoplasm</keyword>
<keyword id="KW-0436">Ligase</keyword>
<keyword id="KW-0547">Nucleotide-binding</keyword>
<keyword id="KW-1185">Reference proteome</keyword>
<dbReference type="EC" id="6.3.1.2"/>
<dbReference type="EMBL" id="BX294092">
    <property type="protein sequence ID" value="CAD71248.1"/>
    <property type="molecule type" value="Genomic_DNA"/>
</dbReference>
<dbReference type="EMBL" id="CM002240">
    <property type="protein sequence ID" value="EAA31668.2"/>
    <property type="molecule type" value="Genomic_DNA"/>
</dbReference>
<dbReference type="RefSeq" id="XP_960904.2">
    <property type="nucleotide sequence ID" value="XM_955811.3"/>
</dbReference>
<dbReference type="SMR" id="Q86ZF9"/>
<dbReference type="FunCoup" id="Q86ZF9">
    <property type="interactions" value="708"/>
</dbReference>
<dbReference type="STRING" id="367110.Q86ZF9"/>
<dbReference type="PaxDb" id="5141-EFNCRP00000006616"/>
<dbReference type="EnsemblFungi" id="EAA31668">
    <property type="protein sequence ID" value="EAA31668"/>
    <property type="gene ID" value="NCU06724"/>
</dbReference>
<dbReference type="GeneID" id="3877042"/>
<dbReference type="KEGG" id="ncr:NCU06724"/>
<dbReference type="VEuPathDB" id="FungiDB:NCU06724"/>
<dbReference type="HOGENOM" id="CLU_036762_1_1_1"/>
<dbReference type="InParanoid" id="Q86ZF9"/>
<dbReference type="OMA" id="TKDYADH"/>
<dbReference type="OrthoDB" id="1936100at2759"/>
<dbReference type="BioCyc" id="MetaCyc:MONOMER-13460"/>
<dbReference type="Proteomes" id="UP000001805">
    <property type="component" value="Chromosome 2, Linkage Group V"/>
</dbReference>
<dbReference type="GO" id="GO:0005737">
    <property type="term" value="C:cytoplasm"/>
    <property type="evidence" value="ECO:0000318"/>
    <property type="project" value="GO_Central"/>
</dbReference>
<dbReference type="GO" id="GO:0005524">
    <property type="term" value="F:ATP binding"/>
    <property type="evidence" value="ECO:0007669"/>
    <property type="project" value="UniProtKB-KW"/>
</dbReference>
<dbReference type="GO" id="GO:0004356">
    <property type="term" value="F:glutamine synthetase activity"/>
    <property type="evidence" value="ECO:0000318"/>
    <property type="project" value="GO_Central"/>
</dbReference>
<dbReference type="GO" id="GO:0006542">
    <property type="term" value="P:glutamine biosynthetic process"/>
    <property type="evidence" value="ECO:0000318"/>
    <property type="project" value="GO_Central"/>
</dbReference>
<dbReference type="FunFam" id="3.30.590.10:FF:000004">
    <property type="entry name" value="Glutamine synthetase"/>
    <property type="match status" value="1"/>
</dbReference>
<dbReference type="Gene3D" id="3.10.20.70">
    <property type="entry name" value="Glutamine synthetase, N-terminal domain"/>
    <property type="match status" value="1"/>
</dbReference>
<dbReference type="Gene3D" id="3.30.590.10">
    <property type="entry name" value="Glutamine synthetase/guanido kinase, catalytic domain"/>
    <property type="match status" value="1"/>
</dbReference>
<dbReference type="InterPro" id="IPR008147">
    <property type="entry name" value="Gln_synt_N"/>
</dbReference>
<dbReference type="InterPro" id="IPR036651">
    <property type="entry name" value="Gln_synt_N_sf"/>
</dbReference>
<dbReference type="InterPro" id="IPR014746">
    <property type="entry name" value="Gln_synth/guanido_kin_cat_dom"/>
</dbReference>
<dbReference type="InterPro" id="IPR008146">
    <property type="entry name" value="Gln_synth_cat_dom"/>
</dbReference>
<dbReference type="InterPro" id="IPR027303">
    <property type="entry name" value="Gln_synth_gly_rich_site"/>
</dbReference>
<dbReference type="InterPro" id="IPR027302">
    <property type="entry name" value="Gln_synth_N_conserv_site"/>
</dbReference>
<dbReference type="InterPro" id="IPR050292">
    <property type="entry name" value="Glutamine_Synthetase"/>
</dbReference>
<dbReference type="PANTHER" id="PTHR20852">
    <property type="entry name" value="GLUTAMINE SYNTHETASE"/>
    <property type="match status" value="1"/>
</dbReference>
<dbReference type="PANTHER" id="PTHR20852:SF57">
    <property type="entry name" value="GLUTAMINE SYNTHETASE 2 CYTOPLASMIC"/>
    <property type="match status" value="1"/>
</dbReference>
<dbReference type="Pfam" id="PF00120">
    <property type="entry name" value="Gln-synt_C"/>
    <property type="match status" value="1"/>
</dbReference>
<dbReference type="Pfam" id="PF03951">
    <property type="entry name" value="Gln-synt_N"/>
    <property type="match status" value="1"/>
</dbReference>
<dbReference type="SMART" id="SM01230">
    <property type="entry name" value="Gln-synt_C"/>
    <property type="match status" value="1"/>
</dbReference>
<dbReference type="SUPFAM" id="SSF54368">
    <property type="entry name" value="Glutamine synthetase, N-terminal domain"/>
    <property type="match status" value="1"/>
</dbReference>
<dbReference type="SUPFAM" id="SSF55931">
    <property type="entry name" value="Glutamine synthetase/guanido kinase"/>
    <property type="match status" value="1"/>
</dbReference>
<dbReference type="PROSITE" id="PS00180">
    <property type="entry name" value="GLNA_1"/>
    <property type="match status" value="1"/>
</dbReference>
<dbReference type="PROSITE" id="PS00181">
    <property type="entry name" value="GLNA_ATP"/>
    <property type="match status" value="1"/>
</dbReference>
<dbReference type="PROSITE" id="PS51986">
    <property type="entry name" value="GS_BETA_GRASP"/>
    <property type="match status" value="1"/>
</dbReference>
<dbReference type="PROSITE" id="PS51987">
    <property type="entry name" value="GS_CATALYTIC"/>
    <property type="match status" value="1"/>
</dbReference>
<feature type="chain" id="PRO_0000153161" description="Glutamine synthetase">
    <location>
        <begin position="1"/>
        <end position="362"/>
    </location>
</feature>
<feature type="domain" description="GS beta-grasp" evidence="2">
    <location>
        <begin position="26"/>
        <end position="107"/>
    </location>
</feature>
<feature type="domain" description="GS catalytic" evidence="3">
    <location>
        <begin position="114"/>
        <end position="362"/>
    </location>
</feature>
<gene>
    <name type="primary">gln-1</name>
    <name type="ORF">B11H7.090</name>
    <name type="ORF">NCU06724</name>
</gene>
<reference key="1">
    <citation type="journal article" date="2003" name="Nucleic Acids Res.">
        <title>What's in the genome of a filamentous fungus? Analysis of the Neurospora genome sequence.</title>
        <authorList>
            <person name="Mannhaupt G."/>
            <person name="Montrone C."/>
            <person name="Haase D."/>
            <person name="Mewes H.-W."/>
            <person name="Aign V."/>
            <person name="Hoheisel J.D."/>
            <person name="Fartmann B."/>
            <person name="Nyakatura G."/>
            <person name="Kempken F."/>
            <person name="Maier J."/>
            <person name="Schulte U."/>
        </authorList>
    </citation>
    <scope>NUCLEOTIDE SEQUENCE [LARGE SCALE GENOMIC DNA]</scope>
    <source>
        <strain>ATCC 24698 / 74-OR23-1A / CBS 708.71 / DSM 1257 / FGSC 987</strain>
    </source>
</reference>
<reference key="2">
    <citation type="journal article" date="2003" name="Nature">
        <title>The genome sequence of the filamentous fungus Neurospora crassa.</title>
        <authorList>
            <person name="Galagan J.E."/>
            <person name="Calvo S.E."/>
            <person name="Borkovich K.A."/>
            <person name="Selker E.U."/>
            <person name="Read N.D."/>
            <person name="Jaffe D.B."/>
            <person name="FitzHugh W."/>
            <person name="Ma L.-J."/>
            <person name="Smirnov S."/>
            <person name="Purcell S."/>
            <person name="Rehman B."/>
            <person name="Elkins T."/>
            <person name="Engels R."/>
            <person name="Wang S."/>
            <person name="Nielsen C.B."/>
            <person name="Butler J."/>
            <person name="Endrizzi M."/>
            <person name="Qui D."/>
            <person name="Ianakiev P."/>
            <person name="Bell-Pedersen D."/>
            <person name="Nelson M.A."/>
            <person name="Werner-Washburne M."/>
            <person name="Selitrennikoff C.P."/>
            <person name="Kinsey J.A."/>
            <person name="Braun E.L."/>
            <person name="Zelter A."/>
            <person name="Schulte U."/>
            <person name="Kothe G.O."/>
            <person name="Jedd G."/>
            <person name="Mewes H.-W."/>
            <person name="Staben C."/>
            <person name="Marcotte E."/>
            <person name="Greenberg D."/>
            <person name="Roy A."/>
            <person name="Foley K."/>
            <person name="Naylor J."/>
            <person name="Stange-Thomann N."/>
            <person name="Barrett R."/>
            <person name="Gnerre S."/>
            <person name="Kamal M."/>
            <person name="Kamvysselis M."/>
            <person name="Mauceli E.W."/>
            <person name="Bielke C."/>
            <person name="Rudd S."/>
            <person name="Frishman D."/>
            <person name="Krystofova S."/>
            <person name="Rasmussen C."/>
            <person name="Metzenberg R.L."/>
            <person name="Perkins D.D."/>
            <person name="Kroken S."/>
            <person name="Cogoni C."/>
            <person name="Macino G."/>
            <person name="Catcheside D.E.A."/>
            <person name="Li W."/>
            <person name="Pratt R.J."/>
            <person name="Osmani S.A."/>
            <person name="DeSouza C.P.C."/>
            <person name="Glass N.L."/>
            <person name="Orbach M.J."/>
            <person name="Berglund J.A."/>
            <person name="Voelker R."/>
            <person name="Yarden O."/>
            <person name="Plamann M."/>
            <person name="Seiler S."/>
            <person name="Dunlap J.C."/>
            <person name="Radford A."/>
            <person name="Aramayo R."/>
            <person name="Natvig D.O."/>
            <person name="Alex L.A."/>
            <person name="Mannhaupt G."/>
            <person name="Ebbole D.J."/>
            <person name="Freitag M."/>
            <person name="Paulsen I."/>
            <person name="Sachs M.S."/>
            <person name="Lander E.S."/>
            <person name="Nusbaum C."/>
            <person name="Birren B.W."/>
        </authorList>
    </citation>
    <scope>NUCLEOTIDE SEQUENCE [LARGE SCALE GENOMIC DNA]</scope>
    <source>
        <strain>ATCC 24698 / 74-OR23-1A / CBS 708.71 / DSM 1257 / FGSC 987</strain>
    </source>
</reference>
<sequence>MASESTILSNAENLKKFLRLPQNGQLIAEYIWIDSEGGTRSKSRTLPEKESQYLPEELPIWNFDGSSTGQAPGENSDVYLKPVAVFPDPFRGSPNILVLSECWNADGTPNKFNHRHEAAKLMEAHADQVPWFGLEQEYTLLDINDRPYGWPRNGFPAPQGPYYCGVGTGKVVQRDIVEAHYKCCLYAGVKISGTNAEVMPAQWEFQVGPCDGIEMGDHLWLARFLLHRVSEEFGAKVSFDPKPIPGDWNGAGLHTNFSTENMRKEGGMKYIEDAIKKLEARHKEHIAVYGEGNDKRLTGRHETGSIDSFTYGVANRGASIRIPRECGAKGYGYFEDRRPASNADPYQITGIIMETCFGAVSE</sequence>
<name>GLNA_NEUCR</name>
<evidence type="ECO:0000250" key="1"/>
<evidence type="ECO:0000255" key="2">
    <source>
        <dbReference type="PROSITE-ProRule" id="PRU01330"/>
    </source>
</evidence>
<evidence type="ECO:0000255" key="3">
    <source>
        <dbReference type="PROSITE-ProRule" id="PRU01331"/>
    </source>
</evidence>
<evidence type="ECO:0000305" key="4"/>
<organism>
    <name type="scientific">Neurospora crassa (strain ATCC 24698 / 74-OR23-1A / CBS 708.71 / DSM 1257 / FGSC 987)</name>
    <dbReference type="NCBI Taxonomy" id="367110"/>
    <lineage>
        <taxon>Eukaryota</taxon>
        <taxon>Fungi</taxon>
        <taxon>Dikarya</taxon>
        <taxon>Ascomycota</taxon>
        <taxon>Pezizomycotina</taxon>
        <taxon>Sordariomycetes</taxon>
        <taxon>Sordariomycetidae</taxon>
        <taxon>Sordariales</taxon>
        <taxon>Sordariaceae</taxon>
        <taxon>Neurospora</taxon>
    </lineage>
</organism>
<comment type="catalytic activity">
    <reaction>
        <text>L-glutamate + NH4(+) + ATP = L-glutamine + ADP + phosphate + H(+)</text>
        <dbReference type="Rhea" id="RHEA:16169"/>
        <dbReference type="ChEBI" id="CHEBI:15378"/>
        <dbReference type="ChEBI" id="CHEBI:28938"/>
        <dbReference type="ChEBI" id="CHEBI:29985"/>
        <dbReference type="ChEBI" id="CHEBI:30616"/>
        <dbReference type="ChEBI" id="CHEBI:43474"/>
        <dbReference type="ChEBI" id="CHEBI:58359"/>
        <dbReference type="ChEBI" id="CHEBI:456216"/>
        <dbReference type="EC" id="6.3.1.2"/>
    </reaction>
</comment>
<comment type="subunit">
    <text evidence="1">Homooctamer.</text>
</comment>
<comment type="subcellular location">
    <subcellularLocation>
        <location evidence="1">Cytoplasm</location>
    </subcellularLocation>
</comment>
<comment type="similarity">
    <text evidence="4">Belongs to the glutamine synthetase family.</text>
</comment>
<accession>Q86ZF9</accession>
<accession>Q7RVC4</accession>
<proteinExistence type="inferred from homology"/>